<accession>P0CD11</accession>
<accession>A9IKR9</accession>
<accession>Q9ME36</accession>
<gene>
    <name evidence="1" type="primary">ndhB2</name>
</gene>
<comment type="function">
    <text evidence="1">NDH shuttles electrons from NAD(P)H:plastoquinone, via FMN and iron-sulfur (Fe-S) centers, to quinones in the photosynthetic chain and possibly in a chloroplast respiratory chain. The immediate electron acceptor for the enzyme in this species is believed to be plastoquinone. Couples the redox reaction to proton translocation, and thus conserves the redox energy in a proton gradient.</text>
</comment>
<comment type="catalytic activity">
    <reaction evidence="1">
        <text>a plastoquinone + NADH + (n+1) H(+)(in) = a plastoquinol + NAD(+) + n H(+)(out)</text>
        <dbReference type="Rhea" id="RHEA:42608"/>
        <dbReference type="Rhea" id="RHEA-COMP:9561"/>
        <dbReference type="Rhea" id="RHEA-COMP:9562"/>
        <dbReference type="ChEBI" id="CHEBI:15378"/>
        <dbReference type="ChEBI" id="CHEBI:17757"/>
        <dbReference type="ChEBI" id="CHEBI:57540"/>
        <dbReference type="ChEBI" id="CHEBI:57945"/>
        <dbReference type="ChEBI" id="CHEBI:62192"/>
    </reaction>
</comment>
<comment type="catalytic activity">
    <reaction evidence="1">
        <text>a plastoquinone + NADPH + (n+1) H(+)(in) = a plastoquinol + NADP(+) + n H(+)(out)</text>
        <dbReference type="Rhea" id="RHEA:42612"/>
        <dbReference type="Rhea" id="RHEA-COMP:9561"/>
        <dbReference type="Rhea" id="RHEA-COMP:9562"/>
        <dbReference type="ChEBI" id="CHEBI:15378"/>
        <dbReference type="ChEBI" id="CHEBI:17757"/>
        <dbReference type="ChEBI" id="CHEBI:57783"/>
        <dbReference type="ChEBI" id="CHEBI:58349"/>
        <dbReference type="ChEBI" id="CHEBI:62192"/>
    </reaction>
</comment>
<comment type="subunit">
    <text evidence="1">NDH is composed of at least 16 different subunits, 5 of which are encoded in the nucleus.</text>
</comment>
<comment type="subcellular location">
    <subcellularLocation>
        <location evidence="1">Plastid</location>
        <location evidence="1">Chloroplast thylakoid membrane</location>
        <topology evidence="1">Multi-pass membrane protein</topology>
    </subcellularLocation>
</comment>
<comment type="similarity">
    <text evidence="1">Belongs to the complex I subunit 2 family.</text>
</comment>
<protein>
    <recommendedName>
        <fullName evidence="1">NAD(P)H-quinone oxidoreductase subunit 2 B, chloroplastic</fullName>
        <ecNumber evidence="1">7.1.1.-</ecNumber>
    </recommendedName>
    <alternativeName>
        <fullName evidence="1">NAD(P)H dehydrogenase, subunit 2 B</fullName>
    </alternativeName>
    <alternativeName>
        <fullName evidence="1">NADH-plastoquinone oxidoreductase subunit 2 B</fullName>
    </alternativeName>
</protein>
<proteinExistence type="inferred from homology"/>
<keyword id="KW-0150">Chloroplast</keyword>
<keyword id="KW-0472">Membrane</keyword>
<keyword id="KW-0520">NAD</keyword>
<keyword id="KW-0521">NADP</keyword>
<keyword id="KW-0934">Plastid</keyword>
<keyword id="KW-0618">Plastoquinone</keyword>
<keyword id="KW-0874">Quinone</keyword>
<keyword id="KW-0793">Thylakoid</keyword>
<keyword id="KW-1278">Translocase</keyword>
<keyword id="KW-0812">Transmembrane</keyword>
<keyword id="KW-1133">Transmembrane helix</keyword>
<keyword id="KW-0813">Transport</keyword>
<name>NU2C2_OENEH</name>
<evidence type="ECO:0000255" key="1">
    <source>
        <dbReference type="HAMAP-Rule" id="MF_00445"/>
    </source>
</evidence>
<feature type="chain" id="PRO_0000391293" description="NAD(P)H-quinone oxidoreductase subunit 2 B, chloroplastic">
    <location>
        <begin position="1"/>
        <end position="510"/>
    </location>
</feature>
<feature type="transmembrane region" description="Helical" evidence="1">
    <location>
        <begin position="26"/>
        <end position="46"/>
    </location>
</feature>
<feature type="transmembrane region" description="Helical" evidence="1">
    <location>
        <begin position="57"/>
        <end position="77"/>
    </location>
</feature>
<feature type="transmembrane region" description="Helical" evidence="1">
    <location>
        <begin position="99"/>
        <end position="119"/>
    </location>
</feature>
<feature type="transmembrane region" description="Helical" evidence="1">
    <location>
        <begin position="124"/>
        <end position="144"/>
    </location>
</feature>
<feature type="transmembrane region" description="Helical" evidence="1">
    <location>
        <begin position="149"/>
        <end position="169"/>
    </location>
</feature>
<feature type="transmembrane region" description="Helical" evidence="1">
    <location>
        <begin position="183"/>
        <end position="203"/>
    </location>
</feature>
<feature type="transmembrane region" description="Helical" evidence="1">
    <location>
        <begin position="227"/>
        <end position="247"/>
    </location>
</feature>
<feature type="transmembrane region" description="Helical" evidence="1">
    <location>
        <begin position="295"/>
        <end position="315"/>
    </location>
</feature>
<feature type="transmembrane region" description="Helical" evidence="1">
    <location>
        <begin position="323"/>
        <end position="342"/>
    </location>
</feature>
<feature type="transmembrane region" description="Helical" evidence="1">
    <location>
        <begin position="354"/>
        <end position="374"/>
    </location>
</feature>
<feature type="transmembrane region" description="Helical" evidence="1">
    <location>
        <begin position="395"/>
        <end position="415"/>
    </location>
</feature>
<feature type="transmembrane region" description="Helical" evidence="1">
    <location>
        <begin position="418"/>
        <end position="438"/>
    </location>
</feature>
<feature type="transmembrane region" description="Helical" evidence="1">
    <location>
        <begin position="484"/>
        <end position="504"/>
    </location>
</feature>
<reference key="1">
    <citation type="journal article" date="2000" name="Mol. Gen. Genet.">
        <title>Complete nucleotide sequence of the Oenothera elata plastid chromosome, representing plastome I of the five distinguishable Euoenothera plastomes.</title>
        <authorList>
            <person name="Hupfer H."/>
            <person name="Swiatek M."/>
            <person name="Hornung S."/>
            <person name="Herrmann R.G."/>
            <person name="Maier R.M."/>
            <person name="Chiu W.-L."/>
            <person name="Sears B."/>
        </authorList>
    </citation>
    <scope>NUCLEOTIDE SEQUENCE [LARGE SCALE GENOMIC DNA]</scope>
    <source>
        <strain>cv. Johansen</strain>
    </source>
</reference>
<reference key="2">
    <citation type="journal article" date="2008" name="Nucleic Acids Res.">
        <title>The complete nucleotide sequences of the five genetically distinct plastid genomes of Oenothera, subsection Oenothera: I. Sequence evaluation and plastome evolution.</title>
        <authorList>
            <person name="Greiner S."/>
            <person name="Wang X."/>
            <person name="Rauwolf U."/>
            <person name="Silber M.V."/>
            <person name="Mayer K."/>
            <person name="Meurer J."/>
            <person name="Haberer G."/>
            <person name="Herrmann R.G."/>
        </authorList>
    </citation>
    <scope>SEQUENCE REVISION TO 12; 49; 120; 147; 164; 289 AND 293</scope>
</reference>
<dbReference type="EC" id="7.1.1.-" evidence="1"/>
<dbReference type="EMBL" id="AJ271079">
    <property type="protein sequence ID" value="CAP58412.1"/>
    <property type="molecule type" value="Genomic_DNA"/>
</dbReference>
<dbReference type="SMR" id="P0CD11"/>
<dbReference type="GO" id="GO:0009535">
    <property type="term" value="C:chloroplast thylakoid membrane"/>
    <property type="evidence" value="ECO:0007669"/>
    <property type="project" value="UniProtKB-SubCell"/>
</dbReference>
<dbReference type="GO" id="GO:0008137">
    <property type="term" value="F:NADH dehydrogenase (ubiquinone) activity"/>
    <property type="evidence" value="ECO:0007669"/>
    <property type="project" value="InterPro"/>
</dbReference>
<dbReference type="GO" id="GO:0048038">
    <property type="term" value="F:quinone binding"/>
    <property type="evidence" value="ECO:0007669"/>
    <property type="project" value="UniProtKB-KW"/>
</dbReference>
<dbReference type="GO" id="GO:0042773">
    <property type="term" value="P:ATP synthesis coupled electron transport"/>
    <property type="evidence" value="ECO:0007669"/>
    <property type="project" value="InterPro"/>
</dbReference>
<dbReference type="GO" id="GO:0019684">
    <property type="term" value="P:photosynthesis, light reaction"/>
    <property type="evidence" value="ECO:0007669"/>
    <property type="project" value="UniProtKB-UniRule"/>
</dbReference>
<dbReference type="HAMAP" id="MF_00445">
    <property type="entry name" value="NDH1_NuoN_1"/>
    <property type="match status" value="1"/>
</dbReference>
<dbReference type="InterPro" id="IPR010096">
    <property type="entry name" value="NADH-Q_OxRdtase_suN/2"/>
</dbReference>
<dbReference type="InterPro" id="IPR001750">
    <property type="entry name" value="ND/Mrp_TM"/>
</dbReference>
<dbReference type="InterPro" id="IPR045693">
    <property type="entry name" value="Ndh2_N"/>
</dbReference>
<dbReference type="NCBIfam" id="TIGR01770">
    <property type="entry name" value="NDH_I_N"/>
    <property type="match status" value="1"/>
</dbReference>
<dbReference type="NCBIfam" id="NF002701">
    <property type="entry name" value="PRK02504.1"/>
    <property type="match status" value="1"/>
</dbReference>
<dbReference type="PANTHER" id="PTHR22773">
    <property type="entry name" value="NADH DEHYDROGENASE"/>
    <property type="match status" value="1"/>
</dbReference>
<dbReference type="Pfam" id="PF19530">
    <property type="entry name" value="Ndh2_N"/>
    <property type="match status" value="1"/>
</dbReference>
<dbReference type="Pfam" id="PF00361">
    <property type="entry name" value="Proton_antipo_M"/>
    <property type="match status" value="1"/>
</dbReference>
<sequence length="510" mass="56573">MIWHVQNENLILDSTRIFMKAFHLPLFDGSFIFPEGILIFGLILLLMIDSTSDQTDIPWFYFISSISLVMSITALLFRWREEPRILFSGNFQTNNFNEIFQFLILLCSTLCIPLSVEYIECTEMAITEFLLFVLTATLGGMFLCGANDLITIFVAPECFSLCSYLLSGYTKKDVRSNEATMKYLLMGGASSSILVHGFSWLYGSSGGEIELQEIVNGLINTQMYNSPGISIALIFITVGIGFKLSPAPSHQWTPDVYEGSPTPVVAFLSVTSKVAASASATRIFDIPFYFSSNEWHPLLEILAILSMILGNLIAITQTSMKRMLAYSSIGQIGYVIIGIIVGDANGGYASMITYMLFYISMNLGTFACIVLFGLRTGTDNIRDYAGLYTKDPFLALSLALCLLSLGGLPPLAGFFGKLHLFWCGWQAGLYFLVSIGLFTSVVSIYYYLKIIKLLMTGRKQEITPHVRNYRRSPLRSNNSIELSMIVCVIASTIPGISMNPIIAIAQDTLF</sequence>
<organism>
    <name type="scientific">Oenothera elata subsp. hookeri</name>
    <name type="common">Hooker's evening primrose</name>
    <name type="synonym">Oenothera hookeri</name>
    <dbReference type="NCBI Taxonomy" id="85636"/>
    <lineage>
        <taxon>Eukaryota</taxon>
        <taxon>Viridiplantae</taxon>
        <taxon>Streptophyta</taxon>
        <taxon>Embryophyta</taxon>
        <taxon>Tracheophyta</taxon>
        <taxon>Spermatophyta</taxon>
        <taxon>Magnoliopsida</taxon>
        <taxon>eudicotyledons</taxon>
        <taxon>Gunneridae</taxon>
        <taxon>Pentapetalae</taxon>
        <taxon>rosids</taxon>
        <taxon>malvids</taxon>
        <taxon>Myrtales</taxon>
        <taxon>Onagraceae</taxon>
        <taxon>Onagroideae</taxon>
        <taxon>Onagreae</taxon>
        <taxon>Oenothera</taxon>
    </lineage>
</organism>
<geneLocation type="chloroplast"/>